<gene>
    <name evidence="6" type="primary">res</name>
</gene>
<dbReference type="EC" id="3.1.21.5" evidence="2"/>
<dbReference type="EMBL" id="X06287">
    <property type="protein sequence ID" value="CAA29615.1"/>
    <property type="molecule type" value="Genomic_DNA"/>
</dbReference>
<dbReference type="EMBL" id="AF234172">
    <property type="protein sequence ID" value="AAQ13982.1"/>
    <property type="molecule type" value="Genomic_DNA"/>
</dbReference>
<dbReference type="PIR" id="S01352">
    <property type="entry name" value="S01352"/>
</dbReference>
<dbReference type="RefSeq" id="YP_006476.1">
    <property type="nucleotide sequence ID" value="NC_005856.1"/>
</dbReference>
<dbReference type="SMR" id="P08764"/>
<dbReference type="REBASE" id="615499">
    <property type="entry name" value="EphP1ORFAP"/>
</dbReference>
<dbReference type="REBASE" id="7754">
    <property type="entry name" value="EphP1ORF1P"/>
</dbReference>
<dbReference type="REBASE" id="988">
    <property type="entry name" value="EcoPI"/>
</dbReference>
<dbReference type="GeneID" id="2777489"/>
<dbReference type="KEGG" id="vg:2777489"/>
<dbReference type="BRENDA" id="3.1.21.5">
    <property type="organism ID" value="16473"/>
</dbReference>
<dbReference type="PRO" id="PR:P08764"/>
<dbReference type="Proteomes" id="UP000008091">
    <property type="component" value="Genome"/>
</dbReference>
<dbReference type="GO" id="GO:0005524">
    <property type="term" value="F:ATP binding"/>
    <property type="evidence" value="ECO:0007669"/>
    <property type="project" value="UniProtKB-KW"/>
</dbReference>
<dbReference type="GO" id="GO:0003677">
    <property type="term" value="F:DNA binding"/>
    <property type="evidence" value="ECO:0007669"/>
    <property type="project" value="UniProtKB-KW"/>
</dbReference>
<dbReference type="GO" id="GO:0004386">
    <property type="term" value="F:helicase activity"/>
    <property type="evidence" value="ECO:0007669"/>
    <property type="project" value="UniProtKB-KW"/>
</dbReference>
<dbReference type="GO" id="GO:0015668">
    <property type="term" value="F:type III site-specific deoxyribonuclease activity"/>
    <property type="evidence" value="ECO:0007669"/>
    <property type="project" value="UniProtKB-EC"/>
</dbReference>
<dbReference type="GO" id="GO:0009307">
    <property type="term" value="P:DNA restriction-modification system"/>
    <property type="evidence" value="ECO:0007669"/>
    <property type="project" value="UniProtKB-KW"/>
</dbReference>
<dbReference type="Gene3D" id="3.40.50.300">
    <property type="entry name" value="P-loop containing nucleotide triphosphate hydrolases"/>
    <property type="match status" value="2"/>
</dbReference>
<dbReference type="InterPro" id="IPR006935">
    <property type="entry name" value="Helicase/UvrB_N"/>
</dbReference>
<dbReference type="InterPro" id="IPR027417">
    <property type="entry name" value="P-loop_NTPase"/>
</dbReference>
<dbReference type="InterPro" id="IPR045572">
    <property type="entry name" value="RE_endonuc_C"/>
</dbReference>
<dbReference type="NCBIfam" id="NF012027">
    <property type="entry name" value="PRK15483.1"/>
    <property type="match status" value="1"/>
</dbReference>
<dbReference type="Pfam" id="PF19778">
    <property type="entry name" value="RE_endonuc"/>
    <property type="match status" value="1"/>
</dbReference>
<dbReference type="Pfam" id="PF04851">
    <property type="entry name" value="ResIII"/>
    <property type="match status" value="1"/>
</dbReference>
<dbReference type="SUPFAM" id="SSF52540">
    <property type="entry name" value="P-loop containing nucleoside triphosphate hydrolases"/>
    <property type="match status" value="2"/>
</dbReference>
<comment type="function">
    <text evidence="1 2 3">A type III restriction enzyme that recognizes 2 inversely oriented double-stranded sequences 5'-AGACC-3' and cleaves DNA 25-27 base pairs downstream of one site, producing a single-strand 5' protrusion of two nucleotides. DNA restriction requires both the Res and Mod subunits (PubMed:11178902, PubMed:2837577). DNA topology affects its action; relaxed and negatively supercoiled DNA are digested but positively supercoiled DNA is not a good substrate (PubMed:11178902). After binding to one recognition site undergoes random one-dimensional diffusion along DNA until it collides with a stationary enzyme bound to the second DNA site, which is when DNA cleavage occurs (By similarity).</text>
</comment>
<comment type="catalytic activity">
    <reaction evidence="2">
        <text>Endonucleolytic cleavage of DNA to give specific double-stranded fragments with terminal 5'-phosphates.</text>
        <dbReference type="EC" id="3.1.21.5"/>
    </reaction>
</comment>
<comment type="cofactor">
    <cofactor>
        <name>Mg(2+)</name>
        <dbReference type="ChEBI" id="CHEBI:18420"/>
    </cofactor>
</comment>
<comment type="cofactor">
    <cofactor evidence="2">
        <name>S-adenosyl-L-methionine</name>
        <dbReference type="ChEBI" id="CHEBI:59789"/>
    </cofactor>
</comment>
<comment type="subunit">
    <text evidence="2">A heterotetramer with stoichiometry Res(2)Mod(2).</text>
</comment>
<comment type="domain">
    <text evidence="2">Has a helicase-type domain in its N-terminus and an endonuclease-type domain in its C-terminus; ATP and DNA hydrolysis activities are mediated by the N- and C-terminal domains respectively. The C-terminus is probably required for interaction with the Mod subunit; deletion of residues 897-970 is unstable as is this protein when expressed alone.</text>
</comment>
<comment type="miscellaneous">
    <text evidence="4 6">This R-M system is also known as EcoP1 and EcoP1I.</text>
</comment>
<comment type="similarity">
    <text evidence="7">Belongs to the type III restriction-modification system Res protein family.</text>
</comment>
<evidence type="ECO:0000250" key="1">
    <source>
        <dbReference type="UniProtKB" id="Q5ZND2"/>
    </source>
</evidence>
<evidence type="ECO:0000269" key="2">
    <source>
    </source>
</evidence>
<evidence type="ECO:0000269" key="3">
    <source>
    </source>
</evidence>
<evidence type="ECO:0000303" key="4">
    <source>
    </source>
</evidence>
<evidence type="ECO:0000303" key="5">
    <source>
    </source>
</evidence>
<evidence type="ECO:0000303" key="6">
    <source>
    </source>
</evidence>
<evidence type="ECO:0000305" key="7"/>
<reference key="1">
    <citation type="journal article" date="1988" name="J. Mol. Biol.">
        <title>Type III DNA restriction and modification systems EcoP1 and EcoP15. Nucleotide sequence of the EcoP1 operon, the EcoP15 mod gene and some EcoP1 mod mutants.</title>
        <authorList>
            <person name="Huembelin M."/>
            <person name="Suri B."/>
            <person name="Rao D.N."/>
            <person name="Hornby D.P."/>
            <person name="Eberle H."/>
            <person name="Pripfl T."/>
            <person name="Kenel S."/>
            <person name="Bickle T.A."/>
        </authorList>
    </citation>
    <scope>NUCLEOTIDE SEQUENCE [GENOMIC DNA]</scope>
    <scope>FUNCTION</scope>
</reference>
<reference key="2">
    <citation type="journal article" date="2004" name="J. Bacteriol.">
        <title>Genome of bacteriophage P1.</title>
        <authorList>
            <person name="Lobocka M.B."/>
            <person name="Rose D.J."/>
            <person name="Plunkett G. III"/>
            <person name="Rusin M."/>
            <person name="Samojedny A."/>
            <person name="Lehnherr H."/>
            <person name="Yarmolinsky M.B."/>
            <person name="Blattner F.R."/>
        </authorList>
    </citation>
    <scope>NUCLEOTIDE SEQUENCE [LARGE SCALE GENOMIC DNA]</scope>
</reference>
<reference key="3">
    <citation type="journal article" date="2001" name="J. Mol. Biol.">
        <title>Subunit assembly and mode of DNA cleavage of the type III restriction endonucleases EcoP1I and EcoP15I.</title>
        <authorList>
            <person name="Janscak P."/>
            <person name="Sandmeier U."/>
            <person name="Szczelkun M.D."/>
            <person name="Bickle T.A."/>
        </authorList>
    </citation>
    <scope>FUNCTION</scope>
    <scope>SUBSTRATE SPECIFICITY</scope>
    <scope>CATALYTIC ACTIVITY</scope>
    <scope>COFACTOR</scope>
    <scope>SUBUNIT</scope>
    <scope>DOMAIN</scope>
    <scope>MUTAGENESIS OF ARG-534; PRO-897; ASP-898; GLU-916 AND LYS-918</scope>
</reference>
<reference key="4">
    <citation type="journal article" date="2003" name="Nucleic Acids Res.">
        <title>A nomenclature for restriction enzymes, DNA methyltransferases, homing endonucleases and their genes.</title>
        <authorList>
            <person name="Roberts R.J."/>
            <person name="Belfort M."/>
            <person name="Bestor T."/>
            <person name="Bhagwat A.S."/>
            <person name="Bickle T.A."/>
            <person name="Bitinaite J."/>
            <person name="Blumenthal R.M."/>
            <person name="Degtyarev S.K."/>
            <person name="Dryden D.T."/>
            <person name="Dybvig K."/>
            <person name="Firman K."/>
            <person name="Gromova E.S."/>
            <person name="Gumport R.I."/>
            <person name="Halford S.E."/>
            <person name="Hattman S."/>
            <person name="Heitman J."/>
            <person name="Hornby D.P."/>
            <person name="Janulaitis A."/>
            <person name="Jeltsch A."/>
            <person name="Josephsen J."/>
            <person name="Kiss A."/>
            <person name="Klaenhammer T.R."/>
            <person name="Kobayashi I."/>
            <person name="Kong H."/>
            <person name="Krueger D.H."/>
            <person name="Lacks S."/>
            <person name="Marinus M.G."/>
            <person name="Miyahara M."/>
            <person name="Morgan R.D."/>
            <person name="Murray N.E."/>
            <person name="Nagaraja V."/>
            <person name="Piekarowicz A."/>
            <person name="Pingoud A."/>
            <person name="Raleigh E."/>
            <person name="Rao D.N."/>
            <person name="Reich N."/>
            <person name="Repin V.E."/>
            <person name="Selker E.U."/>
            <person name="Shaw P.C."/>
            <person name="Stein D.C."/>
            <person name="Stoddard B.L."/>
            <person name="Szybalski W."/>
            <person name="Trautner T.A."/>
            <person name="Van Etten J.L."/>
            <person name="Vitor J.M."/>
            <person name="Wilson G.G."/>
            <person name="Xu S.Y."/>
        </authorList>
    </citation>
    <scope>NOMENCLATURE</scope>
</reference>
<organismHost>
    <name type="scientific">Enterobacteriaceae</name>
    <dbReference type="NCBI Taxonomy" id="543"/>
</organismHost>
<proteinExistence type="evidence at protein level"/>
<sequence length="970" mass="111459">MSKGFTFEKNLPHQKAGVDAVMNVFVSATSHQEDNVSIRLLVNPELRLTEQQYYKNIKKVQELNGIEHVKNNYDARSNVIDVSMETGTGKTYTYTKTIFDLNKSFGINKFIIIVPTLSIKAGTVNFLKSDALKEHFRDDYEREIKTYVVESQKNAGKSTKSYMPQAIHDFVEASNFNKKYIHVLVINTGMIHSKNLNSTYDVGLLDNHFDSPFSALGAVKPFIIIDEPHKFPTGKKTWENIEKFNAQYIIRYGATFSEGYKNLVYRLTAVDAFNEDLVKGIDAYIEDIVGDGDANLKFIKSDGEEVTFELNENNKKTLFKLTKGESLSKTHSAIHDLTLDALGKNTVVLSNGIELKIGCSINPYSYDQTLADSMMRKAIKEHFKLEKEFLTQRPRIKPLTLFFIDDIEGYRDGNNIAGSLKAKFEEYVLAEANELLKIEKDEFYSNYLEKTVKDISSVHGGYFSKDNSDKDDKIEKEINEILHDKELLLSLDNPRRFIFSKWTLREGWDNPNVFQICKLRSSGSTTSKLQEVGRGLRLPVNEYMCRVKDRNFTLKYYVDFTEKDFVDSLVKEVNESSFKERVPSKFTQELKEQIRAQYPELSSRALMNELFNDEIIDDNDNFKDSDAYSRLKSKYPAAFPIGVKPGKIKKATDGKRRTKMRVGKFSELKELWELINQKAVIEYKINSENEFLSIFKSFMLEETERFTKSGVHTRIDKIYIHNDMAMSKSIVSDDDDFAKLNTMSYREFLDNLSQTIFVKHDTLHKVFCDIKDTINITEYLNIQTIRKIKSGFSKYLLNNSFNKFSLGYNLISGSIHPTKFTNADGKPLDEVLSSDLGVLQDNSKAPLDTYLFEEVFYDSELERRNITDREIQSVVVFSKIPKNSIKIPVAGGYTYSPDFAYVVKTAEGDYLNFIIETKNVDSKDSLRLEEKKKIEHAQALFNQISQSVKVEFKTQFANDDIYQLIKSALP</sequence>
<organism>
    <name type="scientific">Escherichia phage P1</name>
    <name type="common">Bacteriophage P1</name>
    <dbReference type="NCBI Taxonomy" id="2886926"/>
    <lineage>
        <taxon>Viruses</taxon>
        <taxon>Duplodnaviria</taxon>
        <taxon>Heunggongvirae</taxon>
        <taxon>Uroviricota</taxon>
        <taxon>Caudoviricetes</taxon>
        <taxon>Punavirus</taxon>
        <taxon>Punavirus P1</taxon>
    </lineage>
</organism>
<protein>
    <recommendedName>
        <fullName>Type III restriction-modification enzyme EcoPI Res subunit</fullName>
        <ecNumber evidence="2">3.1.21.5</ecNumber>
    </recommendedName>
    <alternativeName>
        <fullName evidence="5">Type III restriction enzyme EcoPI</fullName>
    </alternativeName>
</protein>
<keyword id="KW-0067">ATP-binding</keyword>
<keyword id="KW-0238">DNA-binding</keyword>
<keyword id="KW-0255">Endonuclease</keyword>
<keyword id="KW-0347">Helicase</keyword>
<keyword id="KW-0378">Hydrolase</keyword>
<keyword id="KW-0540">Nuclease</keyword>
<keyword id="KW-0547">Nucleotide-binding</keyword>
<keyword id="KW-1185">Reference proteome</keyword>
<keyword id="KW-0680">Restriction system</keyword>
<keyword id="KW-0949">S-adenosyl-L-methionine</keyword>
<accession>P08764</accession>
<feature type="chain" id="PRO_0000077374" description="Type III restriction-modification enzyme EcoPI Res subunit">
    <location>
        <begin position="1"/>
        <end position="970"/>
    </location>
</feature>
<feature type="region of interest" description="Helicase-like domain" evidence="2">
    <location>
        <begin position="75"/>
        <end position="540"/>
    </location>
</feature>
<feature type="region of interest" description="Endonuclease domain" evidence="2">
    <location>
        <begin position="894"/>
        <end position="918"/>
    </location>
</feature>
<feature type="mutagenesis site" description="No DNA restriction, no ATPase activity, forms wild-type complex with Mod." evidence="2">
    <original>R</original>
    <variation>A</variation>
    <location>
        <position position="534"/>
    </location>
</feature>
<feature type="mutagenesis site" description="Wild-type DNA restriction." evidence="2">
    <original>P</original>
    <variation>A</variation>
    <location>
        <position position="897"/>
    </location>
</feature>
<feature type="mutagenesis site" description="No DNA restriction, wild-type ATPase, forms wild-type complex with Mod." evidence="2">
    <original>D</original>
    <variation>A</variation>
    <location>
        <position position="898"/>
    </location>
</feature>
<feature type="mutagenesis site" description="No DNA restriction, has some single-strand nicking activity, wild-type ATPase, forms wild-type complex with Mod." evidence="2">
    <original>E</original>
    <variation>A</variation>
    <location>
        <position position="916"/>
    </location>
</feature>
<feature type="mutagenesis site" description="No DNA restriction, wild-type ATPase, forms wild-type complex with Mod." evidence="2">
    <original>K</original>
    <variation>A</variation>
    <location>
        <position position="918"/>
    </location>
</feature>
<name>T3RE_BPP1</name>